<sequence length="302" mass="35428">MSLTIQDLILKLKLFWEKQGCAILQPLDMEVGAGTSHPMTCLRAIGPEPIFISYIQPSRRFSDGRYGKNPNRLQHYYQFQVIMKPSPINIQDIYLISLQEIGININNNDIKFIEDDWENDTLGAWGVGWEVWINGMEVTQFTYFQQMGGLNCFPITGEITYGIERIAMKLQNIDNVYDLIWSNNFFQKITYKEMFYQNEIQQSVYNFEHSNIEFLLFCFKQYEKEAIKLINLKNPLFIPAYEKLLKAIYNFNLLDARKAISLTAKKNYTIRLRSLTNEISKLYLNYRKSLGFPMCKNNESIS</sequence>
<accession>Q8D1W3</accession>
<protein>
    <recommendedName>
        <fullName evidence="1">Glycine--tRNA ligase alpha subunit</fullName>
        <ecNumber evidence="1">6.1.1.14</ecNumber>
    </recommendedName>
    <alternativeName>
        <fullName evidence="1">Glycyl-tRNA synthetase alpha subunit</fullName>
        <shortName evidence="1">GlyRS</shortName>
    </alternativeName>
</protein>
<comment type="catalytic activity">
    <reaction evidence="1">
        <text>tRNA(Gly) + glycine + ATP = glycyl-tRNA(Gly) + AMP + diphosphate</text>
        <dbReference type="Rhea" id="RHEA:16013"/>
        <dbReference type="Rhea" id="RHEA-COMP:9664"/>
        <dbReference type="Rhea" id="RHEA-COMP:9683"/>
        <dbReference type="ChEBI" id="CHEBI:30616"/>
        <dbReference type="ChEBI" id="CHEBI:33019"/>
        <dbReference type="ChEBI" id="CHEBI:57305"/>
        <dbReference type="ChEBI" id="CHEBI:78442"/>
        <dbReference type="ChEBI" id="CHEBI:78522"/>
        <dbReference type="ChEBI" id="CHEBI:456215"/>
        <dbReference type="EC" id="6.1.1.14"/>
    </reaction>
</comment>
<comment type="subunit">
    <text evidence="1">Tetramer of two alpha and two beta subunits.</text>
</comment>
<comment type="subcellular location">
    <subcellularLocation>
        <location evidence="1">Cytoplasm</location>
    </subcellularLocation>
</comment>
<comment type="similarity">
    <text evidence="1">Belongs to the class-II aminoacyl-tRNA synthetase family.</text>
</comment>
<proteinExistence type="inferred from homology"/>
<reference key="1">
    <citation type="journal article" date="2002" name="Nat. Genet.">
        <title>Genome sequence of the endocellular obligate symbiont of tsetse flies, Wigglesworthia glossinidia.</title>
        <authorList>
            <person name="Akman L."/>
            <person name="Yamashita A."/>
            <person name="Watanabe H."/>
            <person name="Oshima K."/>
            <person name="Shiba T."/>
            <person name="Hattori M."/>
            <person name="Aksoy S."/>
        </authorList>
    </citation>
    <scope>NUCLEOTIDE SEQUENCE [LARGE SCALE GENOMIC DNA]</scope>
</reference>
<gene>
    <name evidence="1" type="primary">glyQ</name>
    <name type="ordered locus">WIGBR5930</name>
</gene>
<name>SYGA_WIGBR</name>
<dbReference type="EC" id="6.1.1.14" evidence="1"/>
<dbReference type="EMBL" id="BA000021">
    <property type="protein sequence ID" value="BAC24739.1"/>
    <property type="molecule type" value="Genomic_DNA"/>
</dbReference>
<dbReference type="SMR" id="Q8D1W3"/>
<dbReference type="STRING" id="36870.gene:10369105"/>
<dbReference type="KEGG" id="wbr:glyQ"/>
<dbReference type="eggNOG" id="COG0752">
    <property type="taxonomic scope" value="Bacteria"/>
</dbReference>
<dbReference type="HOGENOM" id="CLU_057066_1_0_6"/>
<dbReference type="OrthoDB" id="9802183at2"/>
<dbReference type="Proteomes" id="UP000000562">
    <property type="component" value="Chromosome"/>
</dbReference>
<dbReference type="GO" id="GO:0005829">
    <property type="term" value="C:cytosol"/>
    <property type="evidence" value="ECO:0007669"/>
    <property type="project" value="TreeGrafter"/>
</dbReference>
<dbReference type="GO" id="GO:0005524">
    <property type="term" value="F:ATP binding"/>
    <property type="evidence" value="ECO:0007669"/>
    <property type="project" value="UniProtKB-UniRule"/>
</dbReference>
<dbReference type="GO" id="GO:0004820">
    <property type="term" value="F:glycine-tRNA ligase activity"/>
    <property type="evidence" value="ECO:0007669"/>
    <property type="project" value="UniProtKB-UniRule"/>
</dbReference>
<dbReference type="GO" id="GO:0006426">
    <property type="term" value="P:glycyl-tRNA aminoacylation"/>
    <property type="evidence" value="ECO:0007669"/>
    <property type="project" value="UniProtKB-UniRule"/>
</dbReference>
<dbReference type="CDD" id="cd00733">
    <property type="entry name" value="GlyRS_alpha_core"/>
    <property type="match status" value="1"/>
</dbReference>
<dbReference type="FunFam" id="3.30.930.10:FF:000006">
    <property type="entry name" value="Glycine--tRNA ligase alpha subunit"/>
    <property type="match status" value="1"/>
</dbReference>
<dbReference type="Gene3D" id="3.30.930.10">
    <property type="entry name" value="Bira Bifunctional Protein, Domain 2"/>
    <property type="match status" value="1"/>
</dbReference>
<dbReference type="Gene3D" id="1.20.58.180">
    <property type="entry name" value="Class II aaRS and biotin synthetases, domain 2"/>
    <property type="match status" value="1"/>
</dbReference>
<dbReference type="HAMAP" id="MF_00254">
    <property type="entry name" value="Gly_tRNA_synth_alpha"/>
    <property type="match status" value="1"/>
</dbReference>
<dbReference type="InterPro" id="IPR045864">
    <property type="entry name" value="aa-tRNA-synth_II/BPL/LPL"/>
</dbReference>
<dbReference type="InterPro" id="IPR006194">
    <property type="entry name" value="Gly-tRNA-synth_heterodimer"/>
</dbReference>
<dbReference type="InterPro" id="IPR002310">
    <property type="entry name" value="Gly-tRNA_ligase_asu"/>
</dbReference>
<dbReference type="NCBIfam" id="TIGR00388">
    <property type="entry name" value="glyQ"/>
    <property type="match status" value="1"/>
</dbReference>
<dbReference type="NCBIfam" id="NF006827">
    <property type="entry name" value="PRK09348.1"/>
    <property type="match status" value="1"/>
</dbReference>
<dbReference type="PANTHER" id="PTHR30075:SF2">
    <property type="entry name" value="GLYCINE--TRNA LIGASE, CHLOROPLASTIC_MITOCHONDRIAL 2"/>
    <property type="match status" value="1"/>
</dbReference>
<dbReference type="PANTHER" id="PTHR30075">
    <property type="entry name" value="GLYCYL-TRNA SYNTHETASE"/>
    <property type="match status" value="1"/>
</dbReference>
<dbReference type="Pfam" id="PF02091">
    <property type="entry name" value="tRNA-synt_2e"/>
    <property type="match status" value="1"/>
</dbReference>
<dbReference type="PRINTS" id="PR01044">
    <property type="entry name" value="TRNASYNTHGA"/>
</dbReference>
<dbReference type="SUPFAM" id="SSF55681">
    <property type="entry name" value="Class II aaRS and biotin synthetases"/>
    <property type="match status" value="1"/>
</dbReference>
<dbReference type="PROSITE" id="PS50861">
    <property type="entry name" value="AA_TRNA_LIGASE_II_GLYAB"/>
    <property type="match status" value="1"/>
</dbReference>
<evidence type="ECO:0000255" key="1">
    <source>
        <dbReference type="HAMAP-Rule" id="MF_00254"/>
    </source>
</evidence>
<keyword id="KW-0030">Aminoacyl-tRNA synthetase</keyword>
<keyword id="KW-0067">ATP-binding</keyword>
<keyword id="KW-0963">Cytoplasm</keyword>
<keyword id="KW-0436">Ligase</keyword>
<keyword id="KW-0547">Nucleotide-binding</keyword>
<keyword id="KW-0648">Protein biosynthesis</keyword>
<keyword id="KW-1185">Reference proteome</keyword>
<feature type="chain" id="PRO_0000072882" description="Glycine--tRNA ligase alpha subunit">
    <location>
        <begin position="1"/>
        <end position="302"/>
    </location>
</feature>
<organism>
    <name type="scientific">Wigglesworthia glossinidia brevipalpis</name>
    <dbReference type="NCBI Taxonomy" id="36870"/>
    <lineage>
        <taxon>Bacteria</taxon>
        <taxon>Pseudomonadati</taxon>
        <taxon>Pseudomonadota</taxon>
        <taxon>Gammaproteobacteria</taxon>
        <taxon>Enterobacterales</taxon>
        <taxon>Erwiniaceae</taxon>
        <taxon>Wigglesworthia</taxon>
    </lineage>
</organism>